<organism>
    <name type="scientific">Arabidopsis thaliana</name>
    <name type="common">Mouse-ear cress</name>
    <dbReference type="NCBI Taxonomy" id="3702"/>
    <lineage>
        <taxon>Eukaryota</taxon>
        <taxon>Viridiplantae</taxon>
        <taxon>Streptophyta</taxon>
        <taxon>Embryophyta</taxon>
        <taxon>Tracheophyta</taxon>
        <taxon>Spermatophyta</taxon>
        <taxon>Magnoliopsida</taxon>
        <taxon>eudicotyledons</taxon>
        <taxon>Gunneridae</taxon>
        <taxon>Pentapetalae</taxon>
        <taxon>rosids</taxon>
        <taxon>malvids</taxon>
        <taxon>Brassicales</taxon>
        <taxon>Brassicaceae</taxon>
        <taxon>Camelineae</taxon>
        <taxon>Arabidopsis</taxon>
    </lineage>
</organism>
<accession>Q8VZI8</accession>
<accession>Q0WLM5</accession>
<accession>Q9LNX5</accession>
<keyword id="KW-0067">ATP-binding</keyword>
<keyword id="KW-0378">Hydrolase</keyword>
<keyword id="KW-0472">Membrane</keyword>
<keyword id="KW-0479">Metal-binding</keyword>
<keyword id="KW-0482">Metalloprotease</keyword>
<keyword id="KW-0496">Mitochondrion</keyword>
<keyword id="KW-0999">Mitochondrion inner membrane</keyword>
<keyword id="KW-0547">Nucleotide-binding</keyword>
<keyword id="KW-0645">Protease</keyword>
<keyword id="KW-1185">Reference proteome</keyword>
<keyword id="KW-0809">Transit peptide</keyword>
<keyword id="KW-0812">Transmembrane</keyword>
<keyword id="KW-1133">Transmembrane helix</keyword>
<keyword id="KW-0862">Zinc</keyword>
<reference key="1">
    <citation type="journal article" date="2000" name="Nature">
        <title>Sequence and analysis of chromosome 1 of the plant Arabidopsis thaliana.</title>
        <authorList>
            <person name="Theologis A."/>
            <person name="Ecker J.R."/>
            <person name="Palm C.J."/>
            <person name="Federspiel N.A."/>
            <person name="Kaul S."/>
            <person name="White O."/>
            <person name="Alonso J."/>
            <person name="Altafi H."/>
            <person name="Araujo R."/>
            <person name="Bowman C.L."/>
            <person name="Brooks S.Y."/>
            <person name="Buehler E."/>
            <person name="Chan A."/>
            <person name="Chao Q."/>
            <person name="Chen H."/>
            <person name="Cheuk R.F."/>
            <person name="Chin C.W."/>
            <person name="Chung M.K."/>
            <person name="Conn L."/>
            <person name="Conway A.B."/>
            <person name="Conway A.R."/>
            <person name="Creasy T.H."/>
            <person name="Dewar K."/>
            <person name="Dunn P."/>
            <person name="Etgu P."/>
            <person name="Feldblyum T.V."/>
            <person name="Feng J.-D."/>
            <person name="Fong B."/>
            <person name="Fujii C.Y."/>
            <person name="Gill J.E."/>
            <person name="Goldsmith A.D."/>
            <person name="Haas B."/>
            <person name="Hansen N.F."/>
            <person name="Hughes B."/>
            <person name="Huizar L."/>
            <person name="Hunter J.L."/>
            <person name="Jenkins J."/>
            <person name="Johnson-Hopson C."/>
            <person name="Khan S."/>
            <person name="Khaykin E."/>
            <person name="Kim C.J."/>
            <person name="Koo H.L."/>
            <person name="Kremenetskaia I."/>
            <person name="Kurtz D.B."/>
            <person name="Kwan A."/>
            <person name="Lam B."/>
            <person name="Langin-Hooper S."/>
            <person name="Lee A."/>
            <person name="Lee J.M."/>
            <person name="Lenz C.A."/>
            <person name="Li J.H."/>
            <person name="Li Y.-P."/>
            <person name="Lin X."/>
            <person name="Liu S.X."/>
            <person name="Liu Z.A."/>
            <person name="Luros J.S."/>
            <person name="Maiti R."/>
            <person name="Marziali A."/>
            <person name="Militscher J."/>
            <person name="Miranda M."/>
            <person name="Nguyen M."/>
            <person name="Nierman W.C."/>
            <person name="Osborne B.I."/>
            <person name="Pai G."/>
            <person name="Peterson J."/>
            <person name="Pham P.K."/>
            <person name="Rizzo M."/>
            <person name="Rooney T."/>
            <person name="Rowley D."/>
            <person name="Sakano H."/>
            <person name="Salzberg S.L."/>
            <person name="Schwartz J.R."/>
            <person name="Shinn P."/>
            <person name="Southwick A.M."/>
            <person name="Sun H."/>
            <person name="Tallon L.J."/>
            <person name="Tambunga G."/>
            <person name="Toriumi M.J."/>
            <person name="Town C.D."/>
            <person name="Utterback T."/>
            <person name="Van Aken S."/>
            <person name="Vaysberg M."/>
            <person name="Vysotskaia V.S."/>
            <person name="Walker M."/>
            <person name="Wu D."/>
            <person name="Yu G."/>
            <person name="Fraser C.M."/>
            <person name="Venter J.C."/>
            <person name="Davis R.W."/>
        </authorList>
    </citation>
    <scope>NUCLEOTIDE SEQUENCE [LARGE SCALE GENOMIC DNA]</scope>
    <source>
        <strain>cv. Columbia</strain>
    </source>
</reference>
<reference key="2">
    <citation type="journal article" date="2017" name="Plant J.">
        <title>Araport11: a complete reannotation of the Arabidopsis thaliana reference genome.</title>
        <authorList>
            <person name="Cheng C.Y."/>
            <person name="Krishnakumar V."/>
            <person name="Chan A.P."/>
            <person name="Thibaud-Nissen F."/>
            <person name="Schobel S."/>
            <person name="Town C.D."/>
        </authorList>
    </citation>
    <scope>GENOME REANNOTATION</scope>
    <source>
        <strain>cv. Columbia</strain>
    </source>
</reference>
<reference key="3">
    <citation type="journal article" date="2003" name="Science">
        <title>Empirical analysis of transcriptional activity in the Arabidopsis genome.</title>
        <authorList>
            <person name="Yamada K."/>
            <person name="Lim J."/>
            <person name="Dale J.M."/>
            <person name="Chen H."/>
            <person name="Shinn P."/>
            <person name="Palm C.J."/>
            <person name="Southwick A.M."/>
            <person name="Wu H.C."/>
            <person name="Kim C.J."/>
            <person name="Nguyen M."/>
            <person name="Pham P.K."/>
            <person name="Cheuk R.F."/>
            <person name="Karlin-Newmann G."/>
            <person name="Liu S.X."/>
            <person name="Lam B."/>
            <person name="Sakano H."/>
            <person name="Wu T."/>
            <person name="Yu G."/>
            <person name="Miranda M."/>
            <person name="Quach H.L."/>
            <person name="Tripp M."/>
            <person name="Chang C.H."/>
            <person name="Lee J.M."/>
            <person name="Toriumi M.J."/>
            <person name="Chan M.M."/>
            <person name="Tang C.C."/>
            <person name="Onodera C.S."/>
            <person name="Deng J.M."/>
            <person name="Akiyama K."/>
            <person name="Ansari Y."/>
            <person name="Arakawa T."/>
            <person name="Banh J."/>
            <person name="Banno F."/>
            <person name="Bowser L."/>
            <person name="Brooks S.Y."/>
            <person name="Carninci P."/>
            <person name="Chao Q."/>
            <person name="Choy N."/>
            <person name="Enju A."/>
            <person name="Goldsmith A.D."/>
            <person name="Gurjal M."/>
            <person name="Hansen N.F."/>
            <person name="Hayashizaki Y."/>
            <person name="Johnson-Hopson C."/>
            <person name="Hsuan V.W."/>
            <person name="Iida K."/>
            <person name="Karnes M."/>
            <person name="Khan S."/>
            <person name="Koesema E."/>
            <person name="Ishida J."/>
            <person name="Jiang P.X."/>
            <person name="Jones T."/>
            <person name="Kawai J."/>
            <person name="Kamiya A."/>
            <person name="Meyers C."/>
            <person name="Nakajima M."/>
            <person name="Narusaka M."/>
            <person name="Seki M."/>
            <person name="Sakurai T."/>
            <person name="Satou M."/>
            <person name="Tamse R."/>
            <person name="Vaysberg M."/>
            <person name="Wallender E.K."/>
            <person name="Wong C."/>
            <person name="Yamamura Y."/>
            <person name="Yuan S."/>
            <person name="Shinozaki K."/>
            <person name="Davis R.W."/>
            <person name="Theologis A."/>
            <person name="Ecker J.R."/>
        </authorList>
    </citation>
    <scope>NUCLEOTIDE SEQUENCE [LARGE SCALE MRNA]</scope>
    <source>
        <strain>cv. Columbia</strain>
    </source>
</reference>
<reference key="4">
    <citation type="submission" date="2006-07" db="EMBL/GenBank/DDBJ databases">
        <title>Large-scale analysis of RIKEN Arabidopsis full-length (RAFL) cDNAs.</title>
        <authorList>
            <person name="Totoki Y."/>
            <person name="Seki M."/>
            <person name="Ishida J."/>
            <person name="Nakajima M."/>
            <person name="Enju A."/>
            <person name="Kamiya A."/>
            <person name="Narusaka M."/>
            <person name="Shin-i T."/>
            <person name="Nakagawa M."/>
            <person name="Sakamoto N."/>
            <person name="Oishi K."/>
            <person name="Kohara Y."/>
            <person name="Kobayashi M."/>
            <person name="Toyoda A."/>
            <person name="Sakaki Y."/>
            <person name="Sakurai T."/>
            <person name="Iida K."/>
            <person name="Akiyama K."/>
            <person name="Satou M."/>
            <person name="Toyoda T."/>
            <person name="Konagaya A."/>
            <person name="Carninci P."/>
            <person name="Kawai J."/>
            <person name="Hayashizaki Y."/>
            <person name="Shinozaki K."/>
        </authorList>
    </citation>
    <scope>NUCLEOTIDE SEQUENCE [LARGE SCALE MRNA] OF 641-813</scope>
    <source>
        <strain>cv. Columbia</strain>
    </source>
</reference>
<reference key="5">
    <citation type="journal article" date="2003" name="Plant Cell">
        <title>Coordinated regulation and complex formation of yellow variegated1 and yellow variegated2, chloroplastic FtsH metalloproteases involved in the repair cycle of photosystem II in Arabidopsis thylakoid membranes.</title>
        <authorList>
            <person name="Sakamoto W."/>
            <person name="Zaltsman A."/>
            <person name="Adam Z."/>
            <person name="Takahashi Y."/>
        </authorList>
    </citation>
    <scope>SUBCELLULAR LOCATION</scope>
</reference>
<reference key="6">
    <citation type="journal article" date="2004" name="Plant Cell">
        <title>Experimental analysis of the Arabidopsis mitochondrial proteome highlights signaling and regulatory components, provides assessment of targeting prediction programs, and indicates plant-specific mitochondrial proteins.</title>
        <authorList>
            <person name="Heazlewood J.L."/>
            <person name="Tonti-Filippini J.S."/>
            <person name="Gout A.M."/>
            <person name="Day D.A."/>
            <person name="Whelan J."/>
            <person name="Millar A.H."/>
        </authorList>
    </citation>
    <scope>IDENTIFICATION BY MASS SPECTROMETRY</scope>
    <scope>SUBCELLULAR LOCATION [LARGE SCALE ANALYSIS]</scope>
    <source>
        <strain>cv. Landsberg erecta</strain>
    </source>
</reference>
<reference key="7">
    <citation type="journal article" date="2004" name="Plant J.">
        <title>The Arabidopsis FtsH metalloprotease gene family: interchangeability of subunits in chloroplast oligomeric complexes.</title>
        <authorList>
            <person name="Yu F."/>
            <person name="Park S."/>
            <person name="Rodermel S.R."/>
        </authorList>
    </citation>
    <scope>GENE FAMILY</scope>
    <scope>NOMENCLATURE</scope>
</reference>
<reference key="8">
    <citation type="journal article" date="2004" name="Plant Physiol.">
        <title>Expression in multigene families. Analysis of chloroplast and mitochondrial proteases.</title>
        <authorList>
            <person name="Sinvany-Villalobo G."/>
            <person name="Davydov O."/>
            <person name="Ben-Ari G."/>
            <person name="Zaltsman A."/>
            <person name="Raskind A."/>
            <person name="Adam Z."/>
        </authorList>
    </citation>
    <scope>INDUCTION BY HIGH LIGHT</scope>
</reference>
<reference key="9">
    <citation type="journal article" date="2007" name="Physiol. Plantarum">
        <title>The significance of Arabidopsis AAA proteases for activity and assembly/stability of mitochondrial OXPHOS complexes.</title>
        <authorList>
            <person name="Kolodziejczak M."/>
            <person name="Gibala M."/>
            <person name="Urantowka A."/>
            <person name="Janska H."/>
        </authorList>
    </citation>
    <scope>FUNCTION</scope>
    <scope>SUBCELLULAR LOCATION</scope>
</reference>
<name>FTSHA_ARATH</name>
<evidence type="ECO:0000250" key="1"/>
<evidence type="ECO:0000255" key="2"/>
<evidence type="ECO:0000256" key="3">
    <source>
        <dbReference type="SAM" id="MobiDB-lite"/>
    </source>
</evidence>
<evidence type="ECO:0000269" key="4">
    <source>
    </source>
</evidence>
<evidence type="ECO:0000269" key="5">
    <source>
    </source>
</evidence>
<evidence type="ECO:0000269" key="6">
    <source>
    </source>
</evidence>
<evidence type="ECO:0000269" key="7">
    <source ref="9"/>
</evidence>
<evidence type="ECO:0000305" key="8"/>
<gene>
    <name type="primary">FTSH10</name>
    <name type="ordered locus">At1g07510</name>
    <name type="ORF">F22G5.10</name>
    <name type="ORF">F22G5_9</name>
</gene>
<protein>
    <recommendedName>
        <fullName>ATP-dependent zinc metalloprotease FTSH 10, mitochondrial</fullName>
        <shortName>AtFTSH10</shortName>
        <ecNumber>3.4.24.-</ecNumber>
    </recommendedName>
</protein>
<feature type="transit peptide" description="Mitochondrion" evidence="2">
    <location>
        <begin position="1"/>
        <end position="86"/>
    </location>
</feature>
<feature type="chain" id="PRO_0000341335" description="ATP-dependent zinc metalloprotease FTSH 10, mitochondrial">
    <location>
        <begin position="87"/>
        <end position="813"/>
    </location>
</feature>
<feature type="transmembrane region" description="Helical" evidence="2">
    <location>
        <begin position="139"/>
        <end position="157"/>
    </location>
</feature>
<feature type="region of interest" description="Disordered" evidence="3">
    <location>
        <begin position="93"/>
        <end position="129"/>
    </location>
</feature>
<feature type="region of interest" description="Disordered" evidence="3">
    <location>
        <begin position="764"/>
        <end position="813"/>
    </location>
</feature>
<feature type="compositionally biased region" description="Basic and acidic residues" evidence="3">
    <location>
        <begin position="94"/>
        <end position="125"/>
    </location>
</feature>
<feature type="compositionally biased region" description="Basic and acidic residues" evidence="3">
    <location>
        <begin position="764"/>
        <end position="790"/>
    </location>
</feature>
<feature type="active site" evidence="1">
    <location>
        <position position="593"/>
    </location>
</feature>
<feature type="binding site" evidence="2">
    <location>
        <begin position="367"/>
        <end position="374"/>
    </location>
    <ligand>
        <name>ATP</name>
        <dbReference type="ChEBI" id="CHEBI:30616"/>
    </ligand>
</feature>
<feature type="binding site" evidence="1">
    <location>
        <position position="592"/>
    </location>
    <ligand>
        <name>Zn(2+)</name>
        <dbReference type="ChEBI" id="CHEBI:29105"/>
        <note>catalytic</note>
    </ligand>
</feature>
<feature type="binding site" evidence="1">
    <location>
        <position position="596"/>
    </location>
    <ligand>
        <name>Zn(2+)</name>
        <dbReference type="ChEBI" id="CHEBI:29105"/>
        <note>catalytic</note>
    </ligand>
</feature>
<feature type="binding site" evidence="1">
    <location>
        <position position="668"/>
    </location>
    <ligand>
        <name>Zn(2+)</name>
        <dbReference type="ChEBI" id="CHEBI:29105"/>
        <note>catalytic</note>
    </ligand>
</feature>
<feature type="sequence conflict" description="In Ref. 4; BAF01982." evidence="8" ref="4">
    <original>D</original>
    <variation>N</variation>
    <location>
        <position position="642"/>
    </location>
</feature>
<feature type="sequence conflict" description="In Ref. 4; BAF01982." evidence="8" ref="4">
    <original>M</original>
    <variation>L</variation>
    <location>
        <position position="675"/>
    </location>
</feature>
<comment type="function">
    <text evidence="7">Probable ATP-dependent zinc metallopeptidase. Involved in the assembly and/or stability of the complexes I and V of the mitochondrial oxidative phosphorylation system.</text>
</comment>
<comment type="cofactor">
    <cofactor evidence="1">
        <name>Zn(2+)</name>
        <dbReference type="ChEBI" id="CHEBI:29105"/>
    </cofactor>
    <text evidence="1">Binds 1 zinc ion per subunit.</text>
</comment>
<comment type="subcellular location">
    <subcellularLocation>
        <location evidence="4 5 7">Mitochondrion inner membrane</location>
        <topology evidence="4 5 7">Single-pass membrane protein</topology>
        <orientation evidence="4 5 7">Matrix side</orientation>
    </subcellularLocation>
</comment>
<comment type="induction">
    <text evidence="6">By high light.</text>
</comment>
<comment type="similarity">
    <text evidence="8">In the N-terminal section; belongs to the AAA ATPase family.</text>
</comment>
<comment type="similarity">
    <text evidence="8">In the C-terminal section; belongs to the peptidase M41 family.</text>
</comment>
<comment type="sequence caution" evidence="8">
    <conflict type="erroneous gene model prediction">
        <sequence resource="EMBL-CDS" id="AAF79577"/>
    </conflict>
</comment>
<sequence length="813" mass="89555">MIFSKLGSSLARSSRSKGFVYGGGVRSAVFNQGRLRAPQNLEAAVNQVDGGLGFLRRHFASFAARKGLEAGDLSRAFANPRLRRFFSSQTPKKKNYENYYPKDSKKAPKNEQKSESRDGSKKNENENAGDAFSNEYQNMLIPLMAIALILSTFSLGSREQQQISFQEFKNKLLEAGLVDHIDVSNKEVAKVYVRSSPKSQTTEEVVQGPGNGVPAKGRGGQYKYYFNIGSVESFEEKLEEAQEAIGVNSHDFVPVTYVSETIWYQELLRFAPTLLLVATLIFGARRMQGGLGGLGGPGGKAGRGIFNIGKAQITRADKNSKNKIYFKDVAGCEEAKQEIMEFVHFLQNPKKYEDLGAKIPKGALLVGPPGTGKTLLAKATAGESAVPFLSISGSDFMEMFVGVGPSRVRNLFQEARQCAPSIIFIDEIDAIGRARGRGGFSGGNDERESTLNQLLVEMDGFGTTAGVVVLAGTNRPDILDKALLRPGRFDRQITIDKPDIKGRDQIFQIYLKKIKLDHEPSYYSQRLAALTPGFAGADIANVCNEAALIAARHEGATVTMAHFDSAIDRVIGGLEKKNRVISKLERRTVAYHESGHAVAGWFLEHAEPLLKVTIVPRGTAALGFAQYVPNENLLMTKEQLFDMTCMTLGGRAAEQVLIGRISTGAQNDLEKVTKMTYAQVAVYGFSDKIGLLSFPQREDEFSKPYSNRTGAMIDEEVREWVGKAYKRTVELIEEHKEQVAQIAELLLEKEVLHQDDLTKVLGERPFKSGETTNYDRFKSGFEESEKESQKESVPVKPVEDDGIPPLEPQVVPT</sequence>
<proteinExistence type="evidence at protein level"/>
<dbReference type="EC" id="3.4.24.-"/>
<dbReference type="EMBL" id="AC022464">
    <property type="protein sequence ID" value="AAF79577.1"/>
    <property type="status" value="ALT_SEQ"/>
    <property type="molecule type" value="Genomic_DNA"/>
</dbReference>
<dbReference type="EMBL" id="CP002684">
    <property type="protein sequence ID" value="AEE28137.1"/>
    <property type="molecule type" value="Genomic_DNA"/>
</dbReference>
<dbReference type="EMBL" id="AY064138">
    <property type="protein sequence ID" value="AAL36045.1"/>
    <property type="molecule type" value="mRNA"/>
</dbReference>
<dbReference type="EMBL" id="AY124808">
    <property type="protein sequence ID" value="AAM70517.1"/>
    <property type="molecule type" value="mRNA"/>
</dbReference>
<dbReference type="EMBL" id="AK230173">
    <property type="protein sequence ID" value="BAF01982.1"/>
    <property type="molecule type" value="mRNA"/>
</dbReference>
<dbReference type="PIR" id="H86209">
    <property type="entry name" value="H86209"/>
</dbReference>
<dbReference type="RefSeq" id="NP_172231.2">
    <property type="nucleotide sequence ID" value="NM_100625.4"/>
</dbReference>
<dbReference type="SMR" id="Q8VZI8"/>
<dbReference type="BioGRID" id="22506">
    <property type="interactions" value="6"/>
</dbReference>
<dbReference type="FunCoup" id="Q8VZI8">
    <property type="interactions" value="3913"/>
</dbReference>
<dbReference type="STRING" id="3702.Q8VZI8"/>
<dbReference type="MEROPS" id="M41.023"/>
<dbReference type="iPTMnet" id="Q8VZI8"/>
<dbReference type="PaxDb" id="3702-AT1G07510.1"/>
<dbReference type="ProteomicsDB" id="228945"/>
<dbReference type="EnsemblPlants" id="AT1G07510.1">
    <property type="protein sequence ID" value="AT1G07510.1"/>
    <property type="gene ID" value="AT1G07510"/>
</dbReference>
<dbReference type="GeneID" id="837265"/>
<dbReference type="Gramene" id="AT1G07510.1">
    <property type="protein sequence ID" value="AT1G07510.1"/>
    <property type="gene ID" value="AT1G07510"/>
</dbReference>
<dbReference type="KEGG" id="ath:AT1G07510"/>
<dbReference type="Araport" id="AT1G07510"/>
<dbReference type="TAIR" id="AT1G07510">
    <property type="gene designation" value="FTSH10"/>
</dbReference>
<dbReference type="eggNOG" id="KOG0731">
    <property type="taxonomic scope" value="Eukaryota"/>
</dbReference>
<dbReference type="HOGENOM" id="CLU_000688_23_2_1"/>
<dbReference type="InParanoid" id="Q8VZI8"/>
<dbReference type="OMA" id="EVNYLWF"/>
<dbReference type="PhylomeDB" id="Q8VZI8"/>
<dbReference type="BRENDA" id="3.4.24.B20">
    <property type="organism ID" value="399"/>
</dbReference>
<dbReference type="PRO" id="PR:Q8VZI8"/>
<dbReference type="Proteomes" id="UP000006548">
    <property type="component" value="Chromosome 1"/>
</dbReference>
<dbReference type="ExpressionAtlas" id="Q8VZI8">
    <property type="expression patterns" value="baseline and differential"/>
</dbReference>
<dbReference type="GO" id="GO:0009535">
    <property type="term" value="C:chloroplast thylakoid membrane"/>
    <property type="evidence" value="ECO:0007005"/>
    <property type="project" value="TAIR"/>
</dbReference>
<dbReference type="GO" id="GO:0005743">
    <property type="term" value="C:mitochondrial inner membrane"/>
    <property type="evidence" value="ECO:0007669"/>
    <property type="project" value="UniProtKB-SubCell"/>
</dbReference>
<dbReference type="GO" id="GO:0005739">
    <property type="term" value="C:mitochondrion"/>
    <property type="evidence" value="ECO:0000314"/>
    <property type="project" value="TAIR"/>
</dbReference>
<dbReference type="GO" id="GO:0005524">
    <property type="term" value="F:ATP binding"/>
    <property type="evidence" value="ECO:0007669"/>
    <property type="project" value="UniProtKB-KW"/>
</dbReference>
<dbReference type="GO" id="GO:0016887">
    <property type="term" value="F:ATP hydrolysis activity"/>
    <property type="evidence" value="ECO:0007669"/>
    <property type="project" value="InterPro"/>
</dbReference>
<dbReference type="GO" id="GO:0004176">
    <property type="term" value="F:ATP-dependent peptidase activity"/>
    <property type="evidence" value="ECO:0007669"/>
    <property type="project" value="InterPro"/>
</dbReference>
<dbReference type="GO" id="GO:0004222">
    <property type="term" value="F:metalloendopeptidase activity"/>
    <property type="evidence" value="ECO:0007669"/>
    <property type="project" value="InterPro"/>
</dbReference>
<dbReference type="GO" id="GO:0008270">
    <property type="term" value="F:zinc ion binding"/>
    <property type="evidence" value="ECO:0007669"/>
    <property type="project" value="InterPro"/>
</dbReference>
<dbReference type="GO" id="GO:0006508">
    <property type="term" value="P:proteolysis"/>
    <property type="evidence" value="ECO:0007669"/>
    <property type="project" value="UniProtKB-KW"/>
</dbReference>
<dbReference type="CDD" id="cd19501">
    <property type="entry name" value="RecA-like_FtsH"/>
    <property type="match status" value="1"/>
</dbReference>
<dbReference type="FunFam" id="1.10.8.60:FF:000019">
    <property type="entry name" value="AFG3-like AAA ATPase 2"/>
    <property type="match status" value="1"/>
</dbReference>
<dbReference type="FunFam" id="3.40.50.300:FF:000001">
    <property type="entry name" value="ATP-dependent zinc metalloprotease FtsH"/>
    <property type="match status" value="1"/>
</dbReference>
<dbReference type="FunFam" id="3.40.1690.20:FF:000004">
    <property type="entry name" value="ATP-dependent zinc metalloprotease FTSH 10 mitochondrial"/>
    <property type="match status" value="1"/>
</dbReference>
<dbReference type="FunFam" id="1.20.58.760:FF:000005">
    <property type="entry name" value="ATP-dependent zinc metalloprotease FTSH 10, mitochondrial"/>
    <property type="match status" value="1"/>
</dbReference>
<dbReference type="Gene3D" id="1.10.8.60">
    <property type="match status" value="1"/>
</dbReference>
<dbReference type="Gene3D" id="3.40.1690.20">
    <property type="match status" value="1"/>
</dbReference>
<dbReference type="Gene3D" id="3.40.50.300">
    <property type="entry name" value="P-loop containing nucleotide triphosphate hydrolases"/>
    <property type="match status" value="1"/>
</dbReference>
<dbReference type="Gene3D" id="1.20.58.760">
    <property type="entry name" value="Peptidase M41"/>
    <property type="match status" value="1"/>
</dbReference>
<dbReference type="HAMAP" id="MF_01458">
    <property type="entry name" value="FtsH"/>
    <property type="match status" value="1"/>
</dbReference>
<dbReference type="InterPro" id="IPR003593">
    <property type="entry name" value="AAA+_ATPase"/>
</dbReference>
<dbReference type="InterPro" id="IPR041569">
    <property type="entry name" value="AAA_lid_3"/>
</dbReference>
<dbReference type="InterPro" id="IPR050928">
    <property type="entry name" value="ATP-dep_Zn_Metalloprotease"/>
</dbReference>
<dbReference type="InterPro" id="IPR003959">
    <property type="entry name" value="ATPase_AAA_core"/>
</dbReference>
<dbReference type="InterPro" id="IPR003960">
    <property type="entry name" value="ATPase_AAA_CS"/>
</dbReference>
<dbReference type="InterPro" id="IPR005936">
    <property type="entry name" value="FtsH"/>
</dbReference>
<dbReference type="InterPro" id="IPR027417">
    <property type="entry name" value="P-loop_NTPase"/>
</dbReference>
<dbReference type="InterPro" id="IPR011546">
    <property type="entry name" value="Pept_M41_FtsH_extracell"/>
</dbReference>
<dbReference type="InterPro" id="IPR000642">
    <property type="entry name" value="Peptidase_M41"/>
</dbReference>
<dbReference type="InterPro" id="IPR037219">
    <property type="entry name" value="Peptidase_M41-like"/>
</dbReference>
<dbReference type="NCBIfam" id="TIGR01241">
    <property type="entry name" value="FtsH_fam"/>
    <property type="match status" value="1"/>
</dbReference>
<dbReference type="PANTHER" id="PTHR43655:SF2">
    <property type="entry name" value="AFG3 LIKE MATRIX AAA PEPTIDASE SUBUNIT 2, ISOFORM A"/>
    <property type="match status" value="1"/>
</dbReference>
<dbReference type="PANTHER" id="PTHR43655">
    <property type="entry name" value="ATP-DEPENDENT PROTEASE"/>
    <property type="match status" value="1"/>
</dbReference>
<dbReference type="Pfam" id="PF00004">
    <property type="entry name" value="AAA"/>
    <property type="match status" value="1"/>
</dbReference>
<dbReference type="Pfam" id="PF17862">
    <property type="entry name" value="AAA_lid_3"/>
    <property type="match status" value="1"/>
</dbReference>
<dbReference type="Pfam" id="PF06480">
    <property type="entry name" value="FtsH_ext"/>
    <property type="match status" value="1"/>
</dbReference>
<dbReference type="Pfam" id="PF01434">
    <property type="entry name" value="Peptidase_M41"/>
    <property type="match status" value="1"/>
</dbReference>
<dbReference type="SMART" id="SM00382">
    <property type="entry name" value="AAA"/>
    <property type="match status" value="1"/>
</dbReference>
<dbReference type="SUPFAM" id="SSF140990">
    <property type="entry name" value="FtsH protease domain-like"/>
    <property type="match status" value="1"/>
</dbReference>
<dbReference type="SUPFAM" id="SSF52540">
    <property type="entry name" value="P-loop containing nucleoside triphosphate hydrolases"/>
    <property type="match status" value="1"/>
</dbReference>
<dbReference type="PROSITE" id="PS00674">
    <property type="entry name" value="AAA"/>
    <property type="match status" value="1"/>
</dbReference>